<name>UVRC_HELPG</name>
<gene>
    <name evidence="1" type="primary">uvrC</name>
    <name type="ordered locus">HPG27_780</name>
</gene>
<dbReference type="EMBL" id="CP001173">
    <property type="protein sequence ID" value="ACI27535.1"/>
    <property type="molecule type" value="Genomic_DNA"/>
</dbReference>
<dbReference type="RefSeq" id="WP_000774307.1">
    <property type="nucleotide sequence ID" value="NC_011333.1"/>
</dbReference>
<dbReference type="SMR" id="B5Z7I6"/>
<dbReference type="KEGG" id="hpg:HPG27_780"/>
<dbReference type="HOGENOM" id="CLU_014841_3_2_7"/>
<dbReference type="Proteomes" id="UP000001735">
    <property type="component" value="Chromosome"/>
</dbReference>
<dbReference type="GO" id="GO:0005737">
    <property type="term" value="C:cytoplasm"/>
    <property type="evidence" value="ECO:0007669"/>
    <property type="project" value="UniProtKB-SubCell"/>
</dbReference>
<dbReference type="GO" id="GO:0009380">
    <property type="term" value="C:excinuclease repair complex"/>
    <property type="evidence" value="ECO:0007669"/>
    <property type="project" value="InterPro"/>
</dbReference>
<dbReference type="GO" id="GO:0003677">
    <property type="term" value="F:DNA binding"/>
    <property type="evidence" value="ECO:0007669"/>
    <property type="project" value="UniProtKB-UniRule"/>
</dbReference>
<dbReference type="GO" id="GO:0009381">
    <property type="term" value="F:excinuclease ABC activity"/>
    <property type="evidence" value="ECO:0007669"/>
    <property type="project" value="UniProtKB-UniRule"/>
</dbReference>
<dbReference type="GO" id="GO:0006289">
    <property type="term" value="P:nucleotide-excision repair"/>
    <property type="evidence" value="ECO:0007669"/>
    <property type="project" value="UniProtKB-UniRule"/>
</dbReference>
<dbReference type="GO" id="GO:0009432">
    <property type="term" value="P:SOS response"/>
    <property type="evidence" value="ECO:0007669"/>
    <property type="project" value="UniProtKB-UniRule"/>
</dbReference>
<dbReference type="CDD" id="cd10434">
    <property type="entry name" value="GIY-YIG_UvrC_Cho"/>
    <property type="match status" value="1"/>
</dbReference>
<dbReference type="FunFam" id="3.40.1440.10:FF:000001">
    <property type="entry name" value="UvrABC system protein C"/>
    <property type="match status" value="1"/>
</dbReference>
<dbReference type="Gene3D" id="1.10.150.20">
    <property type="entry name" value="5' to 3' exonuclease, C-terminal subdomain"/>
    <property type="match status" value="1"/>
</dbReference>
<dbReference type="Gene3D" id="3.40.1440.10">
    <property type="entry name" value="GIY-YIG endonuclease"/>
    <property type="match status" value="1"/>
</dbReference>
<dbReference type="Gene3D" id="4.10.860.10">
    <property type="entry name" value="UVR domain"/>
    <property type="match status" value="1"/>
</dbReference>
<dbReference type="Gene3D" id="3.30.420.340">
    <property type="entry name" value="UvrC, RNAse H endonuclease domain"/>
    <property type="match status" value="1"/>
</dbReference>
<dbReference type="HAMAP" id="MF_00203">
    <property type="entry name" value="UvrC"/>
    <property type="match status" value="1"/>
</dbReference>
<dbReference type="InterPro" id="IPR000305">
    <property type="entry name" value="GIY-YIG_endonuc"/>
</dbReference>
<dbReference type="InterPro" id="IPR035901">
    <property type="entry name" value="GIY-YIG_endonuc_sf"/>
</dbReference>
<dbReference type="InterPro" id="IPR047296">
    <property type="entry name" value="GIY-YIG_UvrC_Cho"/>
</dbReference>
<dbReference type="InterPro" id="IPR010994">
    <property type="entry name" value="RuvA_2-like"/>
</dbReference>
<dbReference type="InterPro" id="IPR001943">
    <property type="entry name" value="UVR_dom"/>
</dbReference>
<dbReference type="InterPro" id="IPR036876">
    <property type="entry name" value="UVR_dom_sf"/>
</dbReference>
<dbReference type="InterPro" id="IPR050066">
    <property type="entry name" value="UvrABC_protein_C"/>
</dbReference>
<dbReference type="InterPro" id="IPR004791">
    <property type="entry name" value="UvrC"/>
</dbReference>
<dbReference type="InterPro" id="IPR001162">
    <property type="entry name" value="UvrC_RNase_H_dom"/>
</dbReference>
<dbReference type="InterPro" id="IPR038476">
    <property type="entry name" value="UvrC_RNase_H_dom_sf"/>
</dbReference>
<dbReference type="NCBIfam" id="TIGR00194">
    <property type="entry name" value="uvrC"/>
    <property type="match status" value="1"/>
</dbReference>
<dbReference type="PANTHER" id="PTHR30562:SF1">
    <property type="entry name" value="UVRABC SYSTEM PROTEIN C"/>
    <property type="match status" value="1"/>
</dbReference>
<dbReference type="PANTHER" id="PTHR30562">
    <property type="entry name" value="UVRC/OXIDOREDUCTASE"/>
    <property type="match status" value="1"/>
</dbReference>
<dbReference type="Pfam" id="PF01541">
    <property type="entry name" value="GIY-YIG"/>
    <property type="match status" value="1"/>
</dbReference>
<dbReference type="Pfam" id="PF02151">
    <property type="entry name" value="UVR"/>
    <property type="match status" value="1"/>
</dbReference>
<dbReference type="Pfam" id="PF22920">
    <property type="entry name" value="UvrC_RNaseH"/>
    <property type="match status" value="1"/>
</dbReference>
<dbReference type="Pfam" id="PF08459">
    <property type="entry name" value="UvrC_RNaseH_dom"/>
    <property type="match status" value="1"/>
</dbReference>
<dbReference type="SMART" id="SM00465">
    <property type="entry name" value="GIYc"/>
    <property type="match status" value="1"/>
</dbReference>
<dbReference type="SUPFAM" id="SSF46600">
    <property type="entry name" value="C-terminal UvrC-binding domain of UvrB"/>
    <property type="match status" value="1"/>
</dbReference>
<dbReference type="SUPFAM" id="SSF82771">
    <property type="entry name" value="GIY-YIG endonuclease"/>
    <property type="match status" value="1"/>
</dbReference>
<dbReference type="SUPFAM" id="SSF47781">
    <property type="entry name" value="RuvA domain 2-like"/>
    <property type="match status" value="1"/>
</dbReference>
<dbReference type="PROSITE" id="PS50164">
    <property type="entry name" value="GIY_YIG"/>
    <property type="match status" value="1"/>
</dbReference>
<dbReference type="PROSITE" id="PS50151">
    <property type="entry name" value="UVR"/>
    <property type="match status" value="1"/>
</dbReference>
<dbReference type="PROSITE" id="PS50165">
    <property type="entry name" value="UVRC"/>
    <property type="match status" value="1"/>
</dbReference>
<keyword id="KW-0963">Cytoplasm</keyword>
<keyword id="KW-0227">DNA damage</keyword>
<keyword id="KW-0228">DNA excision</keyword>
<keyword id="KW-0234">DNA repair</keyword>
<keyword id="KW-0267">Excision nuclease</keyword>
<keyword id="KW-1185">Reference proteome</keyword>
<keyword id="KW-0742">SOS response</keyword>
<accession>B5Z7I6</accession>
<sequence>MADLLSSLKNLPNSSGVYQYFDKNRQLLYIGKAKNLKKRIKSYFSICNNEITPNHRASLRIQMMVKQIAFLETILVENEQDALILENSLIKQLKPKYNILLRDDKTYPYIYMDFSTDFPIPLITRKILKQPGVKYFGPFTSGAKDILDSLYELLPLVQKKNCIKDKKACMFYQIERCKAPCEDKITKEEYLKIAKECLEMIENKDRLIKELELKMERLSSNLRFEEALIYRDRIAKIQKIAPFTCMDLAKLYDLDIFAFYGASNKAVLVKMFMRGGKIISSAFEKIHSLNGFDTDEAMKQAIINHYQSHLPLIPEQILLNACSNEALKELQEFISHQYSKKIALSIPKKGDKLALIEIAMKNAQEIFSQEKTSNEDLILEEVRSLFNLECVPYRVEIFDTSHHANSQCVGGMVVYENNEFQKDSYRRYHLKGSNEYAQMSELLTRRALDFAKEPPPNLWVIDGGRAQLNIALEILKSSGSFVEVIAISKEKRDSKAYRSKGGAKDIIHTPSDTFKLLPSDKRLQWVQKLRDESHRYAINFHRSTKLKNMKQIALLKEKGIGEASVKKLLDYFGSFEAIEKASEQEKNAVLKKRI</sequence>
<feature type="chain" id="PRO_1000099489" description="UvrABC system protein C">
    <location>
        <begin position="1"/>
        <end position="594"/>
    </location>
</feature>
<feature type="domain" description="GIY-YIG" evidence="1">
    <location>
        <begin position="13"/>
        <end position="99"/>
    </location>
</feature>
<feature type="domain" description="UVR" evidence="1">
    <location>
        <begin position="205"/>
        <end position="240"/>
    </location>
</feature>
<comment type="function">
    <text evidence="1">The UvrABC repair system catalyzes the recognition and processing of DNA lesions. UvrC both incises the 5' and 3' sides of the lesion. The N-terminal half is responsible for the 3' incision and the C-terminal half is responsible for the 5' incision.</text>
</comment>
<comment type="subunit">
    <text evidence="1">Interacts with UvrB in an incision complex.</text>
</comment>
<comment type="subcellular location">
    <subcellularLocation>
        <location evidence="1">Cytoplasm</location>
    </subcellularLocation>
</comment>
<comment type="similarity">
    <text evidence="1">Belongs to the UvrC family.</text>
</comment>
<protein>
    <recommendedName>
        <fullName evidence="1">UvrABC system protein C</fullName>
        <shortName evidence="1">Protein UvrC</shortName>
    </recommendedName>
    <alternativeName>
        <fullName evidence="1">Excinuclease ABC subunit C</fullName>
    </alternativeName>
</protein>
<proteinExistence type="inferred from homology"/>
<evidence type="ECO:0000255" key="1">
    <source>
        <dbReference type="HAMAP-Rule" id="MF_00203"/>
    </source>
</evidence>
<organism>
    <name type="scientific">Helicobacter pylori (strain G27)</name>
    <dbReference type="NCBI Taxonomy" id="563041"/>
    <lineage>
        <taxon>Bacteria</taxon>
        <taxon>Pseudomonadati</taxon>
        <taxon>Campylobacterota</taxon>
        <taxon>Epsilonproteobacteria</taxon>
        <taxon>Campylobacterales</taxon>
        <taxon>Helicobacteraceae</taxon>
        <taxon>Helicobacter</taxon>
    </lineage>
</organism>
<reference key="1">
    <citation type="journal article" date="2009" name="J. Bacteriol.">
        <title>The complete genome sequence of Helicobacter pylori strain G27.</title>
        <authorList>
            <person name="Baltrus D.A."/>
            <person name="Amieva M.R."/>
            <person name="Covacci A."/>
            <person name="Lowe T.M."/>
            <person name="Merrell D.S."/>
            <person name="Ottemann K.M."/>
            <person name="Stein M."/>
            <person name="Salama N.R."/>
            <person name="Guillemin K."/>
        </authorList>
    </citation>
    <scope>NUCLEOTIDE SEQUENCE [LARGE SCALE GENOMIC DNA]</scope>
    <source>
        <strain>G27</strain>
    </source>
</reference>